<dbReference type="EMBL" id="M17642">
    <property type="protein sequence ID" value="AAA22473.1"/>
    <property type="molecule type" value="Genomic_DNA"/>
</dbReference>
<dbReference type="EMBL" id="Z75208">
    <property type="protein sequence ID" value="CAA99550.1"/>
    <property type="molecule type" value="Genomic_DNA"/>
</dbReference>
<dbReference type="EMBL" id="AJ223964">
    <property type="protein sequence ID" value="CAA11701.1"/>
    <property type="molecule type" value="Genomic_DNA"/>
</dbReference>
<dbReference type="EMBL" id="AL009126">
    <property type="protein sequence ID" value="CAB14801.2"/>
    <property type="molecule type" value="Genomic_DNA"/>
</dbReference>
<dbReference type="PIR" id="C27893">
    <property type="entry name" value="C27893"/>
</dbReference>
<dbReference type="RefSeq" id="NP_390719.2">
    <property type="nucleotide sequence ID" value="NC_000964.3"/>
</dbReference>
<dbReference type="RefSeq" id="WP_003184172.1">
    <property type="nucleotide sequence ID" value="NZ_OZ025638.1"/>
</dbReference>
<dbReference type="PDB" id="1FSE">
    <property type="method" value="X-ray"/>
    <property type="resolution" value="2.05 A"/>
    <property type="chains" value="A/B/C/D/E/F=1-74"/>
</dbReference>
<dbReference type="PDBsum" id="1FSE"/>
<dbReference type="SMR" id="P11470"/>
<dbReference type="FunCoup" id="P11470">
    <property type="interactions" value="18"/>
</dbReference>
<dbReference type="STRING" id="224308.BSU28410"/>
<dbReference type="PaxDb" id="224308-BSU28410"/>
<dbReference type="EnsemblBacteria" id="CAB14801">
    <property type="protein sequence ID" value="CAB14801"/>
    <property type="gene ID" value="BSU_28410"/>
</dbReference>
<dbReference type="GeneID" id="92917997"/>
<dbReference type="GeneID" id="937462"/>
<dbReference type="KEGG" id="bsu:BSU28410"/>
<dbReference type="PATRIC" id="fig|224308.179.peg.3086"/>
<dbReference type="eggNOG" id="COG2197">
    <property type="taxonomic scope" value="Bacteria"/>
</dbReference>
<dbReference type="InParanoid" id="P11470"/>
<dbReference type="OrthoDB" id="3531307at2"/>
<dbReference type="PhylomeDB" id="P11470"/>
<dbReference type="BioCyc" id="BSUB:BSU28410-MONOMER"/>
<dbReference type="EvolutionaryTrace" id="P11470"/>
<dbReference type="PRO" id="PR:P11470"/>
<dbReference type="Proteomes" id="UP000001570">
    <property type="component" value="Chromosome"/>
</dbReference>
<dbReference type="GO" id="GO:0003677">
    <property type="term" value="F:DNA binding"/>
    <property type="evidence" value="ECO:0007669"/>
    <property type="project" value="UniProtKB-KW"/>
</dbReference>
<dbReference type="GO" id="GO:0006355">
    <property type="term" value="P:regulation of DNA-templated transcription"/>
    <property type="evidence" value="ECO:0007669"/>
    <property type="project" value="InterPro"/>
</dbReference>
<dbReference type="CDD" id="cd06170">
    <property type="entry name" value="LuxR_C_like"/>
    <property type="match status" value="1"/>
</dbReference>
<dbReference type="FunFam" id="1.10.10.10:FF:000129">
    <property type="entry name" value="Helix-turn-helix transcriptional regulator"/>
    <property type="match status" value="1"/>
</dbReference>
<dbReference type="Gene3D" id="1.10.10.10">
    <property type="entry name" value="Winged helix-like DNA-binding domain superfamily/Winged helix DNA-binding domain"/>
    <property type="match status" value="1"/>
</dbReference>
<dbReference type="InterPro" id="IPR016032">
    <property type="entry name" value="Sig_transdc_resp-reg_C-effctor"/>
</dbReference>
<dbReference type="InterPro" id="IPR000792">
    <property type="entry name" value="Tscrpt_reg_LuxR_C"/>
</dbReference>
<dbReference type="InterPro" id="IPR036388">
    <property type="entry name" value="WH-like_DNA-bd_sf"/>
</dbReference>
<dbReference type="PANTHER" id="PTHR44688">
    <property type="entry name" value="DNA-BINDING TRANSCRIPTIONAL ACTIVATOR DEVR_DOSR"/>
    <property type="match status" value="1"/>
</dbReference>
<dbReference type="PANTHER" id="PTHR44688:SF16">
    <property type="entry name" value="DNA-BINDING TRANSCRIPTIONAL ACTIVATOR DEVR_DOSR"/>
    <property type="match status" value="1"/>
</dbReference>
<dbReference type="Pfam" id="PF00196">
    <property type="entry name" value="GerE"/>
    <property type="match status" value="1"/>
</dbReference>
<dbReference type="PRINTS" id="PR00038">
    <property type="entry name" value="HTHLUXR"/>
</dbReference>
<dbReference type="SMART" id="SM00421">
    <property type="entry name" value="HTH_LUXR"/>
    <property type="match status" value="1"/>
</dbReference>
<dbReference type="SUPFAM" id="SSF46894">
    <property type="entry name" value="C-terminal effector domain of the bipartite response regulators"/>
    <property type="match status" value="1"/>
</dbReference>
<dbReference type="PROSITE" id="PS00622">
    <property type="entry name" value="HTH_LUXR_1"/>
    <property type="match status" value="1"/>
</dbReference>
<dbReference type="PROSITE" id="PS50043">
    <property type="entry name" value="HTH_LUXR_2"/>
    <property type="match status" value="1"/>
</dbReference>
<protein>
    <recommendedName>
        <fullName>Spore germination protein GerE</fullName>
    </recommendedName>
</protein>
<accession>P11470</accession>
<gene>
    <name type="primary">gerE</name>
    <name type="ordered locus">BSU28410</name>
</gene>
<proteinExistence type="evidence at protein level"/>
<sequence>MKEKEFQSKPLLTKREREVFELLVQDKTTKEIASELFISEKTVRNHISNAMQKLGVKGRSQAVVELLRMGELEL</sequence>
<comment type="function">
    <text>Involved in the regulation of spore formation. Directs the transcription of several genes that encode structural components of the protein coat that encases the mature spore (CotB, CotC, CotG, CotS, CotV, CotW, CotX, CotY and CotZ). Also controls the cgeAB and cgeCDE operons.</text>
</comment>
<name>GERE_BACSU</name>
<reference key="1">
    <citation type="journal article" date="1986" name="J. Gen. Microbiol.">
        <title>The nucleotide sequence and the transcription during sporulation of the gerE gene of Bacillus subtilis.</title>
        <authorList>
            <person name="Cutting S.M."/>
            <person name="Mandelstam J."/>
        </authorList>
    </citation>
    <scope>NUCLEOTIDE SEQUENCE [GENOMIC DNA]</scope>
</reference>
<reference key="2">
    <citation type="journal article" date="1996" name="Microbiology">
        <title>The dnaB-pheA (256 degrees-240 degrees) region of the Bacillus subtilis chromosome containing genes responsible for stress responses, the utilization of plant cell walls and primary metabolism.</title>
        <authorList>
            <person name="Wipat A."/>
            <person name="Carter N."/>
            <person name="Brignell C.S."/>
            <person name="Guy J.B."/>
            <person name="Piper K."/>
            <person name="Sanders J."/>
            <person name="Emmerson P.T."/>
            <person name="Harwood C.R."/>
        </authorList>
    </citation>
    <scope>NUCLEOTIDE SEQUENCE [GENOMIC DNA]</scope>
    <source>
        <strain>168</strain>
    </source>
</reference>
<reference key="3">
    <citation type="submission" date="1998-03" db="EMBL/GenBank/DDBJ databases">
        <title>Crystallisation and preliminary X-ray diffraction analysis of the sporulation regulatory protein GerE from Bacillus subtilis.</title>
        <authorList>
            <person name="Ducros V."/>
            <person name="Brannigan J.A."/>
            <person name="Lewis R.J."/>
            <person name="Wilkinson A.J."/>
        </authorList>
    </citation>
    <scope>NUCLEOTIDE SEQUENCE [GENOMIC DNA]</scope>
    <source>
        <strain>168 / IG20</strain>
    </source>
</reference>
<reference key="4">
    <citation type="journal article" date="1997" name="Nature">
        <title>The complete genome sequence of the Gram-positive bacterium Bacillus subtilis.</title>
        <authorList>
            <person name="Kunst F."/>
            <person name="Ogasawara N."/>
            <person name="Moszer I."/>
            <person name="Albertini A.M."/>
            <person name="Alloni G."/>
            <person name="Azevedo V."/>
            <person name="Bertero M.G."/>
            <person name="Bessieres P."/>
            <person name="Bolotin A."/>
            <person name="Borchert S."/>
            <person name="Borriss R."/>
            <person name="Boursier L."/>
            <person name="Brans A."/>
            <person name="Braun M."/>
            <person name="Brignell S.C."/>
            <person name="Bron S."/>
            <person name="Brouillet S."/>
            <person name="Bruschi C.V."/>
            <person name="Caldwell B."/>
            <person name="Capuano V."/>
            <person name="Carter N.M."/>
            <person name="Choi S.-K."/>
            <person name="Codani J.-J."/>
            <person name="Connerton I.F."/>
            <person name="Cummings N.J."/>
            <person name="Daniel R.A."/>
            <person name="Denizot F."/>
            <person name="Devine K.M."/>
            <person name="Duesterhoeft A."/>
            <person name="Ehrlich S.D."/>
            <person name="Emmerson P.T."/>
            <person name="Entian K.-D."/>
            <person name="Errington J."/>
            <person name="Fabret C."/>
            <person name="Ferrari E."/>
            <person name="Foulger D."/>
            <person name="Fritz C."/>
            <person name="Fujita M."/>
            <person name="Fujita Y."/>
            <person name="Fuma S."/>
            <person name="Galizzi A."/>
            <person name="Galleron N."/>
            <person name="Ghim S.-Y."/>
            <person name="Glaser P."/>
            <person name="Goffeau A."/>
            <person name="Golightly E.J."/>
            <person name="Grandi G."/>
            <person name="Guiseppi G."/>
            <person name="Guy B.J."/>
            <person name="Haga K."/>
            <person name="Haiech J."/>
            <person name="Harwood C.R."/>
            <person name="Henaut A."/>
            <person name="Hilbert H."/>
            <person name="Holsappel S."/>
            <person name="Hosono S."/>
            <person name="Hullo M.-F."/>
            <person name="Itaya M."/>
            <person name="Jones L.-M."/>
            <person name="Joris B."/>
            <person name="Karamata D."/>
            <person name="Kasahara Y."/>
            <person name="Klaerr-Blanchard M."/>
            <person name="Klein C."/>
            <person name="Kobayashi Y."/>
            <person name="Koetter P."/>
            <person name="Koningstein G."/>
            <person name="Krogh S."/>
            <person name="Kumano M."/>
            <person name="Kurita K."/>
            <person name="Lapidus A."/>
            <person name="Lardinois S."/>
            <person name="Lauber J."/>
            <person name="Lazarevic V."/>
            <person name="Lee S.-M."/>
            <person name="Levine A."/>
            <person name="Liu H."/>
            <person name="Masuda S."/>
            <person name="Mauel C."/>
            <person name="Medigue C."/>
            <person name="Medina N."/>
            <person name="Mellado R.P."/>
            <person name="Mizuno M."/>
            <person name="Moestl D."/>
            <person name="Nakai S."/>
            <person name="Noback M."/>
            <person name="Noone D."/>
            <person name="O'Reilly M."/>
            <person name="Ogawa K."/>
            <person name="Ogiwara A."/>
            <person name="Oudega B."/>
            <person name="Park S.-H."/>
            <person name="Parro V."/>
            <person name="Pohl T.M."/>
            <person name="Portetelle D."/>
            <person name="Porwollik S."/>
            <person name="Prescott A.M."/>
            <person name="Presecan E."/>
            <person name="Pujic P."/>
            <person name="Purnelle B."/>
            <person name="Rapoport G."/>
            <person name="Rey M."/>
            <person name="Reynolds S."/>
            <person name="Rieger M."/>
            <person name="Rivolta C."/>
            <person name="Rocha E."/>
            <person name="Roche B."/>
            <person name="Rose M."/>
            <person name="Sadaie Y."/>
            <person name="Sato T."/>
            <person name="Scanlan E."/>
            <person name="Schleich S."/>
            <person name="Schroeter R."/>
            <person name="Scoffone F."/>
            <person name="Sekiguchi J."/>
            <person name="Sekowska A."/>
            <person name="Seror S.J."/>
            <person name="Serror P."/>
            <person name="Shin B.-S."/>
            <person name="Soldo B."/>
            <person name="Sorokin A."/>
            <person name="Tacconi E."/>
            <person name="Takagi T."/>
            <person name="Takahashi H."/>
            <person name="Takemaru K."/>
            <person name="Takeuchi M."/>
            <person name="Tamakoshi A."/>
            <person name="Tanaka T."/>
            <person name="Terpstra P."/>
            <person name="Tognoni A."/>
            <person name="Tosato V."/>
            <person name="Uchiyama S."/>
            <person name="Vandenbol M."/>
            <person name="Vannier F."/>
            <person name="Vassarotti A."/>
            <person name="Viari A."/>
            <person name="Wambutt R."/>
            <person name="Wedler E."/>
            <person name="Wedler H."/>
            <person name="Weitzenegger T."/>
            <person name="Winters P."/>
            <person name="Wipat A."/>
            <person name="Yamamoto H."/>
            <person name="Yamane K."/>
            <person name="Yasumoto K."/>
            <person name="Yata K."/>
            <person name="Yoshida K."/>
            <person name="Yoshikawa H.-F."/>
            <person name="Zumstein E."/>
            <person name="Yoshikawa H."/>
            <person name="Danchin A."/>
        </authorList>
    </citation>
    <scope>NUCLEOTIDE SEQUENCE [LARGE SCALE GENOMIC DNA]</scope>
    <source>
        <strain>168</strain>
    </source>
</reference>
<reference key="5">
    <citation type="journal article" date="2009" name="Microbiology">
        <title>From a consortium sequence to a unified sequence: the Bacillus subtilis 168 reference genome a decade later.</title>
        <authorList>
            <person name="Barbe V."/>
            <person name="Cruveiller S."/>
            <person name="Kunst F."/>
            <person name="Lenoble P."/>
            <person name="Meurice G."/>
            <person name="Sekowska A."/>
            <person name="Vallenet D."/>
            <person name="Wang T."/>
            <person name="Moszer I."/>
            <person name="Medigue C."/>
            <person name="Danchin A."/>
        </authorList>
    </citation>
    <scope>SEQUENCE REVISION TO 11</scope>
</reference>
<reference key="6">
    <citation type="journal article" date="1989" name="J. Mol. Biol.">
        <title>Regulatory studies on the promoter for a gene governing synthesis and assembly of the spore coat in Bacillus subtilis.</title>
        <authorList>
            <person name="Cutting S.M."/>
            <person name="Panzer S."/>
            <person name="Losick R."/>
        </authorList>
    </citation>
    <scope>NUCLEOTIDE SEQUENCE [GENOMIC DNA] OF 1-35</scope>
</reference>
<reference key="7">
    <citation type="journal article" date="2001" name="J. Mol. Biol.">
        <title>Crystal structure of GerE, the ultimate transcriptional regulator of spore formation in Bacillus subtilis.</title>
        <authorList>
            <person name="Ducros V.M.-A."/>
            <person name="Lewis R.J."/>
            <person name="Verma C.S."/>
            <person name="Dodson E.J."/>
            <person name="Leonard G."/>
            <person name="Turkenburg J.P."/>
            <person name="Murshudov G.N."/>
            <person name="Wilkinson A.J."/>
            <person name="Brannigan J.A."/>
        </authorList>
    </citation>
    <scope>X-RAY CRYSTALLOGRAPHY (2.05 ANGSTROMS)</scope>
</reference>
<feature type="chain" id="PRO_0000184159" description="Spore germination protein GerE">
    <location>
        <begin position="1"/>
        <end position="74"/>
    </location>
</feature>
<feature type="domain" description="HTH luxR-type" evidence="1">
    <location>
        <begin position="5"/>
        <end position="70"/>
    </location>
</feature>
<feature type="DNA-binding region" description="H-T-H motif" evidence="1">
    <location>
        <begin position="29"/>
        <end position="48"/>
    </location>
</feature>
<feature type="sequence conflict" description="In Ref. 1; AAA22473, 2; CAA99550 and 6." evidence="2" ref="1 2 6">
    <original>L</original>
    <variation>S</variation>
    <location>
        <position position="11"/>
    </location>
</feature>
<feature type="helix" evidence="3">
    <location>
        <begin position="14"/>
        <end position="23"/>
    </location>
</feature>
<feature type="turn" evidence="3">
    <location>
        <begin position="24"/>
        <end position="26"/>
    </location>
</feature>
<feature type="helix" evidence="3">
    <location>
        <begin position="29"/>
        <end position="36"/>
    </location>
</feature>
<feature type="helix" evidence="3">
    <location>
        <begin position="40"/>
        <end position="54"/>
    </location>
</feature>
<feature type="helix" evidence="3">
    <location>
        <begin position="59"/>
        <end position="68"/>
    </location>
</feature>
<keyword id="KW-0002">3D-structure</keyword>
<keyword id="KW-0238">DNA-binding</keyword>
<keyword id="KW-0309">Germination</keyword>
<keyword id="KW-1185">Reference proteome</keyword>
<keyword id="KW-0804">Transcription</keyword>
<keyword id="KW-0805">Transcription regulation</keyword>
<organism>
    <name type="scientific">Bacillus subtilis (strain 168)</name>
    <dbReference type="NCBI Taxonomy" id="224308"/>
    <lineage>
        <taxon>Bacteria</taxon>
        <taxon>Bacillati</taxon>
        <taxon>Bacillota</taxon>
        <taxon>Bacilli</taxon>
        <taxon>Bacillales</taxon>
        <taxon>Bacillaceae</taxon>
        <taxon>Bacillus</taxon>
    </lineage>
</organism>
<evidence type="ECO:0000255" key="1">
    <source>
        <dbReference type="PROSITE-ProRule" id="PRU00411"/>
    </source>
</evidence>
<evidence type="ECO:0000305" key="2"/>
<evidence type="ECO:0007829" key="3">
    <source>
        <dbReference type="PDB" id="1FSE"/>
    </source>
</evidence>